<dbReference type="EMBL" id="Z74761">
    <property type="protein sequence ID" value="CAA99018.1"/>
    <property type="molecule type" value="Genomic_DNA"/>
</dbReference>
<dbReference type="EMBL" id="BK006948">
    <property type="protein sequence ID" value="DAA10763.1"/>
    <property type="molecule type" value="Genomic_DNA"/>
</dbReference>
<dbReference type="PIR" id="S66701">
    <property type="entry name" value="S66701"/>
</dbReference>
<dbReference type="RefSeq" id="NP_014623.1">
    <property type="nucleotide sequence ID" value="NM_001183273.1"/>
</dbReference>
<dbReference type="BioGRID" id="34384">
    <property type="interactions" value="78"/>
</dbReference>
<dbReference type="FunCoup" id="Q08157">
    <property type="interactions" value="2"/>
</dbReference>
<dbReference type="IntAct" id="Q08157">
    <property type="interactions" value="1"/>
</dbReference>
<dbReference type="MINT" id="Q08157"/>
<dbReference type="STRING" id="4932.YOL019W"/>
<dbReference type="iPTMnet" id="Q08157"/>
<dbReference type="PaxDb" id="4932-YOL019W"/>
<dbReference type="PeptideAtlas" id="Q08157"/>
<dbReference type="EnsemblFungi" id="YOL019W_mRNA">
    <property type="protein sequence ID" value="YOL019W"/>
    <property type="gene ID" value="YOL019W"/>
</dbReference>
<dbReference type="GeneID" id="854141"/>
<dbReference type="KEGG" id="sce:YOL019W"/>
<dbReference type="AGR" id="SGD:S000005379"/>
<dbReference type="SGD" id="S000005379">
    <property type="gene designation" value="TOS7"/>
</dbReference>
<dbReference type="VEuPathDB" id="FungiDB:YOL019W"/>
<dbReference type="eggNOG" id="ENOG502RYG1">
    <property type="taxonomic scope" value="Eukaryota"/>
</dbReference>
<dbReference type="HOGENOM" id="CLU_026237_0_0_1"/>
<dbReference type="InParanoid" id="Q08157"/>
<dbReference type="OMA" id="HKPFTEL"/>
<dbReference type="OrthoDB" id="2354757at2759"/>
<dbReference type="BioCyc" id="YEAST:G3O-33435-MONOMER"/>
<dbReference type="BioGRID-ORCS" id="854141">
    <property type="hits" value="0 hits in 10 CRISPR screens"/>
</dbReference>
<dbReference type="PRO" id="PR:Q08157"/>
<dbReference type="Proteomes" id="UP000002311">
    <property type="component" value="Chromosome XV"/>
</dbReference>
<dbReference type="RNAct" id="Q08157">
    <property type="molecule type" value="protein"/>
</dbReference>
<dbReference type="GO" id="GO:0032153">
    <property type="term" value="C:cell division site"/>
    <property type="evidence" value="ECO:0000318"/>
    <property type="project" value="GO_Central"/>
</dbReference>
<dbReference type="GO" id="GO:0071944">
    <property type="term" value="C:cell periphery"/>
    <property type="evidence" value="ECO:0007005"/>
    <property type="project" value="SGD"/>
</dbReference>
<dbReference type="GO" id="GO:0000324">
    <property type="term" value="C:fungal-type vacuole"/>
    <property type="evidence" value="ECO:0007005"/>
    <property type="project" value="SGD"/>
</dbReference>
<dbReference type="GO" id="GO:0000328">
    <property type="term" value="C:fungal-type vacuole lumen"/>
    <property type="evidence" value="ECO:0000314"/>
    <property type="project" value="SGD"/>
</dbReference>
<dbReference type="GO" id="GO:0035838">
    <property type="term" value="C:growing cell tip"/>
    <property type="evidence" value="ECO:0000318"/>
    <property type="project" value="GO_Central"/>
</dbReference>
<dbReference type="GO" id="GO:0005886">
    <property type="term" value="C:plasma membrane"/>
    <property type="evidence" value="ECO:0000314"/>
    <property type="project" value="SGD"/>
</dbReference>
<dbReference type="GO" id="GO:0005774">
    <property type="term" value="C:vacuolar membrane"/>
    <property type="evidence" value="ECO:0007669"/>
    <property type="project" value="UniProtKB-SubCell"/>
</dbReference>
<dbReference type="GO" id="GO:0006887">
    <property type="term" value="P:exocytosis"/>
    <property type="evidence" value="ECO:0007669"/>
    <property type="project" value="UniProtKB-KW"/>
</dbReference>
<dbReference type="InterPro" id="IPR051380">
    <property type="entry name" value="pH-response_reg_palI/RIM9"/>
</dbReference>
<dbReference type="InterPro" id="IPR009571">
    <property type="entry name" value="SUR7/Rim9-like_fungi"/>
</dbReference>
<dbReference type="PANTHER" id="PTHR28013:SF8">
    <property type="entry name" value="AEL027WP"/>
    <property type="match status" value="1"/>
</dbReference>
<dbReference type="PANTHER" id="PTHR28013">
    <property type="entry name" value="PROTEIN DCV1-RELATED"/>
    <property type="match status" value="1"/>
</dbReference>
<dbReference type="Pfam" id="PF06687">
    <property type="entry name" value="SUR7"/>
    <property type="match status" value="1"/>
</dbReference>
<name>TOS7_YEAST</name>
<comment type="function">
    <text evidence="4">Protein involved in secretion and cell wall organization (PubMed:33002606). Contributes to cell surface-related functions as a auxiliary component of MCC/eisosome that specifically interacts with the secretory pathway (PubMed:33002606).</text>
</comment>
<comment type="subunit">
    <text evidence="4">Forms homo dimers or homooligomers in MCC microdomains (PubMed:33002606). Interacts with BOI2 and RHO3, two key regulators of secretion (PubMed:33002606).</text>
</comment>
<comment type="subcellular location">
    <subcellularLocation>
        <location evidence="3">Vacuole membrane</location>
        <topology evidence="1">Multi-pass membrane protein</topology>
    </subcellularLocation>
    <subcellularLocation>
        <location evidence="4">Cell membrane</location>
        <topology evidence="1">Multi-pass membrane protein</topology>
    </subcellularLocation>
    <text evidence="4">Localizes to punctate patches on the plasma membrane that are largely co-localized with the plasma membrane microdomains named MCC (membrane compartment of CAN1).</text>
</comment>
<comment type="disruption phenotype">
    <text evidence="4">Renders the cells more sensitive to the cell wall-disrupting agents Congo red and calcofluor white while.</text>
</comment>
<accession>Q08157</accession>
<accession>D6W247</accession>
<evidence type="ECO:0000255" key="1"/>
<evidence type="ECO:0000256" key="2">
    <source>
        <dbReference type="SAM" id="MobiDB-lite"/>
    </source>
</evidence>
<evidence type="ECO:0000269" key="3">
    <source>
    </source>
</evidence>
<evidence type="ECO:0000269" key="4">
    <source>
    </source>
</evidence>
<evidence type="ECO:0000303" key="5">
    <source>
    </source>
</evidence>
<evidence type="ECO:0007744" key="6">
    <source>
    </source>
</evidence>
<proteinExistence type="evidence at protein level"/>
<gene>
    <name evidence="5" type="primary">TOS7</name>
    <name type="ordered locus">YOL019W</name>
</gene>
<feature type="chain" id="PRO_0000245272" description="Uncharacterized membrane protein TOS7">
    <location>
        <begin position="1"/>
        <end position="551"/>
    </location>
</feature>
<feature type="topological domain" description="Cytoplasmic" evidence="1">
    <location>
        <begin position="1"/>
        <end position="7"/>
    </location>
</feature>
<feature type="transmembrane region" description="Helical" evidence="1">
    <location>
        <begin position="8"/>
        <end position="28"/>
    </location>
</feature>
<feature type="topological domain" description="Vacuolar" evidence="1">
    <location>
        <begin position="29"/>
        <end position="88"/>
    </location>
</feature>
<feature type="transmembrane region" description="Helical" evidence="1">
    <location>
        <begin position="89"/>
        <end position="109"/>
    </location>
</feature>
<feature type="topological domain" description="Cytoplasmic" evidence="1">
    <location>
        <begin position="110"/>
        <end position="135"/>
    </location>
</feature>
<feature type="transmembrane region" description="Helical" evidence="1">
    <location>
        <begin position="136"/>
        <end position="156"/>
    </location>
</feature>
<feature type="topological domain" description="Vacuolar" evidence="1">
    <location>
        <begin position="157"/>
        <end position="160"/>
    </location>
</feature>
<feature type="transmembrane region" description="Helical" evidence="1">
    <location>
        <begin position="161"/>
        <end position="181"/>
    </location>
</feature>
<feature type="topological domain" description="Cytoplasmic" evidence="1">
    <location>
        <begin position="182"/>
        <end position="551"/>
    </location>
</feature>
<feature type="region of interest" description="Disordered" evidence="2">
    <location>
        <begin position="280"/>
        <end position="341"/>
    </location>
</feature>
<feature type="compositionally biased region" description="Polar residues" evidence="2">
    <location>
        <begin position="307"/>
        <end position="320"/>
    </location>
</feature>
<feature type="compositionally biased region" description="Low complexity" evidence="2">
    <location>
        <begin position="321"/>
        <end position="341"/>
    </location>
</feature>
<feature type="modified residue" description="Phosphoserine" evidence="6">
    <location>
        <position position="224"/>
    </location>
</feature>
<feature type="modified residue" description="Phosphoserine" evidence="6">
    <location>
        <position position="232"/>
    </location>
</feature>
<feature type="modified residue" description="Phosphoserine" evidence="6">
    <location>
        <position position="363"/>
    </location>
</feature>
<reference key="1">
    <citation type="journal article" date="1997" name="Nature">
        <title>The nucleotide sequence of Saccharomyces cerevisiae chromosome XV.</title>
        <authorList>
            <person name="Dujon B."/>
            <person name="Albermann K."/>
            <person name="Aldea M."/>
            <person name="Alexandraki D."/>
            <person name="Ansorge W."/>
            <person name="Arino J."/>
            <person name="Benes V."/>
            <person name="Bohn C."/>
            <person name="Bolotin-Fukuhara M."/>
            <person name="Bordonne R."/>
            <person name="Boyer J."/>
            <person name="Camasses A."/>
            <person name="Casamayor A."/>
            <person name="Casas C."/>
            <person name="Cheret G."/>
            <person name="Cziepluch C."/>
            <person name="Daignan-Fornier B."/>
            <person name="Dang V.-D."/>
            <person name="de Haan M."/>
            <person name="Delius H."/>
            <person name="Durand P."/>
            <person name="Fairhead C."/>
            <person name="Feldmann H."/>
            <person name="Gaillon L."/>
            <person name="Galisson F."/>
            <person name="Gamo F.-J."/>
            <person name="Gancedo C."/>
            <person name="Goffeau A."/>
            <person name="Goulding S.E."/>
            <person name="Grivell L.A."/>
            <person name="Habbig B."/>
            <person name="Hand N.J."/>
            <person name="Hani J."/>
            <person name="Hattenhorst U."/>
            <person name="Hebling U."/>
            <person name="Hernando Y."/>
            <person name="Herrero E."/>
            <person name="Heumann K."/>
            <person name="Hiesel R."/>
            <person name="Hilger F."/>
            <person name="Hofmann B."/>
            <person name="Hollenberg C.P."/>
            <person name="Hughes B."/>
            <person name="Jauniaux J.-C."/>
            <person name="Kalogeropoulos A."/>
            <person name="Katsoulou C."/>
            <person name="Kordes E."/>
            <person name="Lafuente M.J."/>
            <person name="Landt O."/>
            <person name="Louis E.J."/>
            <person name="Maarse A.C."/>
            <person name="Madania A."/>
            <person name="Mannhaupt G."/>
            <person name="Marck C."/>
            <person name="Martin R.P."/>
            <person name="Mewes H.-W."/>
            <person name="Michaux G."/>
            <person name="Paces V."/>
            <person name="Parle-McDermott A.G."/>
            <person name="Pearson B.M."/>
            <person name="Perrin A."/>
            <person name="Pettersson B."/>
            <person name="Poch O."/>
            <person name="Pohl T.M."/>
            <person name="Poirey R."/>
            <person name="Portetelle D."/>
            <person name="Pujol A."/>
            <person name="Purnelle B."/>
            <person name="Ramezani Rad M."/>
            <person name="Rechmann S."/>
            <person name="Schwager C."/>
            <person name="Schweizer M."/>
            <person name="Sor F."/>
            <person name="Sterky F."/>
            <person name="Tarassov I.A."/>
            <person name="Teodoru C."/>
            <person name="Tettelin H."/>
            <person name="Thierry A."/>
            <person name="Tobiasch E."/>
            <person name="Tzermia M."/>
            <person name="Uhlen M."/>
            <person name="Unseld M."/>
            <person name="Valens M."/>
            <person name="Vandenbol M."/>
            <person name="Vetter I."/>
            <person name="Vlcek C."/>
            <person name="Voet M."/>
            <person name="Volckaert G."/>
            <person name="Voss H."/>
            <person name="Wambutt R."/>
            <person name="Wedler H."/>
            <person name="Wiemann S."/>
            <person name="Winsor B."/>
            <person name="Wolfe K.H."/>
            <person name="Zollner A."/>
            <person name="Zumstein E."/>
            <person name="Kleine K."/>
        </authorList>
    </citation>
    <scope>NUCLEOTIDE SEQUENCE [LARGE SCALE GENOMIC DNA]</scope>
    <source>
        <strain>ATCC 204508 / S288c</strain>
    </source>
</reference>
<reference key="2">
    <citation type="journal article" date="2014" name="G3 (Bethesda)">
        <title>The reference genome sequence of Saccharomyces cerevisiae: Then and now.</title>
        <authorList>
            <person name="Engel S.R."/>
            <person name="Dietrich F.S."/>
            <person name="Fisk D.G."/>
            <person name="Binkley G."/>
            <person name="Balakrishnan R."/>
            <person name="Costanzo M.C."/>
            <person name="Dwight S.S."/>
            <person name="Hitz B.C."/>
            <person name="Karra K."/>
            <person name="Nash R.S."/>
            <person name="Weng S."/>
            <person name="Wong E.D."/>
            <person name="Lloyd P."/>
            <person name="Skrzypek M.S."/>
            <person name="Miyasato S.R."/>
            <person name="Simison M."/>
            <person name="Cherry J.M."/>
        </authorList>
    </citation>
    <scope>GENOME REANNOTATION</scope>
    <source>
        <strain>ATCC 204508 / S288c</strain>
    </source>
</reference>
<reference key="3">
    <citation type="journal article" date="2003" name="Nature">
        <title>Global analysis of protein localization in budding yeast.</title>
        <authorList>
            <person name="Huh W.-K."/>
            <person name="Falvo J.V."/>
            <person name="Gerke L.C."/>
            <person name="Carroll A.S."/>
            <person name="Howson R.W."/>
            <person name="Weissman J.S."/>
            <person name="O'Shea E.K."/>
        </authorList>
    </citation>
    <scope>SUBCELLULAR LOCATION [LARGE SCALE ANALYSIS]</scope>
</reference>
<reference key="4">
    <citation type="journal article" date="2004" name="Yeast">
        <title>Localization of proteins that are coordinately expressed with Cln2 during the cell cycle.</title>
        <authorList>
            <person name="Sundin B.A."/>
            <person name="Chiu C.-H."/>
            <person name="Riffle M."/>
            <person name="Davis T.N."/>
            <person name="Muller E.G.D."/>
        </authorList>
    </citation>
    <scope>SUBCELLULAR LOCATION</scope>
</reference>
<reference key="5">
    <citation type="journal article" date="2006" name="Proc. Natl. Acad. Sci. U.S.A.">
        <title>A global topology map of the Saccharomyces cerevisiae membrane proteome.</title>
        <authorList>
            <person name="Kim H."/>
            <person name="Melen K."/>
            <person name="Oesterberg M."/>
            <person name="von Heijne G."/>
        </authorList>
    </citation>
    <scope>TOPOLOGY [LARGE SCALE ANALYSIS]</scope>
    <source>
        <strain>ATCC 208353 / W303-1A</strain>
    </source>
</reference>
<reference key="6">
    <citation type="journal article" date="2009" name="Science">
        <title>Global analysis of Cdk1 substrate phosphorylation sites provides insights into evolution.</title>
        <authorList>
            <person name="Holt L.J."/>
            <person name="Tuch B.B."/>
            <person name="Villen J."/>
            <person name="Johnson A.D."/>
            <person name="Gygi S.P."/>
            <person name="Morgan D.O."/>
        </authorList>
    </citation>
    <scope>PHOSPHORYLATION [LARGE SCALE ANALYSIS] AT SER-224; SER-232 AND SER-363</scope>
    <scope>IDENTIFICATION BY MASS SPECTROMETRY [LARGE SCALE ANALYSIS]</scope>
</reference>
<reference key="7">
    <citation type="journal article" date="2020" name="Fungal Genet. Biol.">
        <title>The Sur7/PalI family transmembrane protein Tos7 (Yol019w) plays a role in secretion in budding yeast.</title>
        <authorList>
            <person name="Zhu J."/>
            <person name="Jia Z.W."/>
            <person name="Xia C.Y."/>
            <person name="Gao X.D."/>
        </authorList>
    </citation>
    <scope>FUNCTION</scope>
    <scope>DISRUPTION PHENOTYPE</scope>
    <scope>INTERACTION WITH BOI2 AND RHO3</scope>
</reference>
<organism>
    <name type="scientific">Saccharomyces cerevisiae (strain ATCC 204508 / S288c)</name>
    <name type="common">Baker's yeast</name>
    <dbReference type="NCBI Taxonomy" id="559292"/>
    <lineage>
        <taxon>Eukaryota</taxon>
        <taxon>Fungi</taxon>
        <taxon>Dikarya</taxon>
        <taxon>Ascomycota</taxon>
        <taxon>Saccharomycotina</taxon>
        <taxon>Saccharomycetes</taxon>
        <taxon>Saccharomycetales</taxon>
        <taxon>Saccharomycetaceae</taxon>
        <taxon>Saccharomyces</taxon>
    </lineage>
</organism>
<protein>
    <recommendedName>
        <fullName evidence="5">Uncharacterized membrane protein TOS7</fullName>
    </recommendedName>
</protein>
<sequence length="551" mass="60901">MKKNSSVVFFLVGLSQFVTMAFLIIGSITAPIFKQIGYSKYDEITYGTFGYCKEGSCSKASYNYHPDELSDSDSNWKLNSNARSILGKIIFITPIAAGLNFLGFLCTIMSVLLINVLSSDRVGSASAIMFFVNLTFSTLGFLSASLICIVVFLLFYPHVTWCSWVLIPGAALSLLVIPLIFSAYSRSSGSRDDDETEELEEKGMLLNDPYLSSKSGRFDIDADSEANLRGDSRTNLLGDNFKNGTNITVVPDIISHNQDPKLSNITTSTTSDISTFDKEAKDMENSNGSGLNEEEDDGMAYDKRRSTSTYSVIESESGLKNGSVSNNYVRNNGSNTSNNINYKVPLGKTEISSSASLASSDYSQREVIPHRNPSRLLNDIMETSFNEPNDSHINSMSSYNDKDSTLTSISQRGVNPEVYNQMPRETAAGPANIRPYAGQPHPAPLVYPQQRLQPQQQQPQQQYHQYNLYQRTTPAGPDPSNVILQSNPYFNVAPNQVPQHRNPVPGVGFAPNPLPNQSPITQGYKPAYKRRMQNKNLPRATTSLNNPYGFR</sequence>
<keyword id="KW-1003">Cell membrane</keyword>
<keyword id="KW-0268">Exocytosis</keyword>
<keyword id="KW-0472">Membrane</keyword>
<keyword id="KW-0597">Phosphoprotein</keyword>
<keyword id="KW-1185">Reference proteome</keyword>
<keyword id="KW-0812">Transmembrane</keyword>
<keyword id="KW-1133">Transmembrane helix</keyword>
<keyword id="KW-0926">Vacuole</keyword>